<name>BACD2_RAT</name>
<keyword id="KW-0963">Cytoplasm</keyword>
<keyword id="KW-0967">Endosome</keyword>
<keyword id="KW-0539">Nucleus</keyword>
<keyword id="KW-0597">Phosphoprotein</keyword>
<keyword id="KW-1185">Reference proteome</keyword>
<keyword id="KW-0833">Ubl conjugation pathway</keyword>
<protein>
    <recommendedName>
        <fullName>BTB/POZ domain-containing adapter for CUL3-mediated RhoA degradation protein 2</fullName>
    </recommendedName>
    <alternativeName>
        <fullName>BTB/POZ domain-containing protein TNFAIP1</fullName>
    </alternativeName>
    <alternativeName>
        <fullName>Tumor necrosis factor-induced protein 1</fullName>
    </alternativeName>
</protein>
<dbReference type="EMBL" id="AY336949">
    <property type="protein sequence ID" value="AAP97077.1"/>
    <property type="molecule type" value="mRNA"/>
</dbReference>
<dbReference type="EMBL" id="BC128704">
    <property type="protein sequence ID" value="AAI28705.1"/>
    <property type="molecule type" value="mRNA"/>
</dbReference>
<dbReference type="RefSeq" id="NP_891995.1">
    <property type="nucleotide sequence ID" value="NM_182950.4"/>
</dbReference>
<dbReference type="SMR" id="Q7TNY1"/>
<dbReference type="BioGRID" id="252226">
    <property type="interactions" value="1"/>
</dbReference>
<dbReference type="FunCoup" id="Q7TNY1">
    <property type="interactions" value="1172"/>
</dbReference>
<dbReference type="STRING" id="10116.ENSRNOP00000012245"/>
<dbReference type="iPTMnet" id="Q7TNY1"/>
<dbReference type="PhosphoSitePlus" id="Q7TNY1"/>
<dbReference type="jPOST" id="Q7TNY1"/>
<dbReference type="PaxDb" id="10116-ENSRNOP00000012245"/>
<dbReference type="Ensembl" id="ENSRNOT00000012245.5">
    <property type="protein sequence ID" value="ENSRNOP00000012245.3"/>
    <property type="gene ID" value="ENSRNOG00000009069.5"/>
</dbReference>
<dbReference type="GeneID" id="287543"/>
<dbReference type="KEGG" id="rno:287543"/>
<dbReference type="AGR" id="RGD:3877"/>
<dbReference type="CTD" id="7126"/>
<dbReference type="RGD" id="3877">
    <property type="gene designation" value="Tnfaip1"/>
</dbReference>
<dbReference type="eggNOG" id="KOG2716">
    <property type="taxonomic scope" value="Eukaryota"/>
</dbReference>
<dbReference type="GeneTree" id="ENSGT00950000183143"/>
<dbReference type="HOGENOM" id="CLU_060008_0_0_1"/>
<dbReference type="InParanoid" id="Q7TNY1"/>
<dbReference type="OMA" id="EMSGDTC"/>
<dbReference type="OrthoDB" id="2333377at2759"/>
<dbReference type="PhylomeDB" id="Q7TNY1"/>
<dbReference type="TreeFam" id="TF315649"/>
<dbReference type="Reactome" id="R-RNO-9696264">
    <property type="pathway name" value="RND3 GTPase cycle"/>
</dbReference>
<dbReference type="Reactome" id="R-RNO-9696270">
    <property type="pathway name" value="RND2 GTPase cycle"/>
</dbReference>
<dbReference type="UniPathway" id="UPA00143"/>
<dbReference type="PRO" id="PR:Q7TNY1"/>
<dbReference type="Proteomes" id="UP000002494">
    <property type="component" value="Chromosome 10"/>
</dbReference>
<dbReference type="Bgee" id="ENSRNOG00000009069">
    <property type="expression patterns" value="Expressed in lung and 19 other cell types or tissues"/>
</dbReference>
<dbReference type="GO" id="GO:0031463">
    <property type="term" value="C:Cul3-RING ubiquitin ligase complex"/>
    <property type="evidence" value="ECO:0000250"/>
    <property type="project" value="UniProtKB"/>
</dbReference>
<dbReference type="GO" id="GO:0005737">
    <property type="term" value="C:cytoplasm"/>
    <property type="evidence" value="ECO:0000250"/>
    <property type="project" value="UniProtKB"/>
</dbReference>
<dbReference type="GO" id="GO:0005768">
    <property type="term" value="C:endosome"/>
    <property type="evidence" value="ECO:0000250"/>
    <property type="project" value="UniProtKB"/>
</dbReference>
<dbReference type="GO" id="GO:0005634">
    <property type="term" value="C:nucleus"/>
    <property type="evidence" value="ECO:0007669"/>
    <property type="project" value="UniProtKB-SubCell"/>
</dbReference>
<dbReference type="GO" id="GO:0030332">
    <property type="term" value="F:cyclin binding"/>
    <property type="evidence" value="ECO:0000353"/>
    <property type="project" value="RGD"/>
</dbReference>
<dbReference type="GO" id="GO:0042802">
    <property type="term" value="F:identical protein binding"/>
    <property type="evidence" value="ECO:0000266"/>
    <property type="project" value="RGD"/>
</dbReference>
<dbReference type="GO" id="GO:0031267">
    <property type="term" value="F:small GTPase binding"/>
    <property type="evidence" value="ECO:0000250"/>
    <property type="project" value="UniProtKB"/>
</dbReference>
<dbReference type="GO" id="GO:0004842">
    <property type="term" value="F:ubiquitin-protein transferase activity"/>
    <property type="evidence" value="ECO:0007669"/>
    <property type="project" value="Ensembl"/>
</dbReference>
<dbReference type="GO" id="GO:0016477">
    <property type="term" value="P:cell migration"/>
    <property type="evidence" value="ECO:0000250"/>
    <property type="project" value="UniProtKB"/>
</dbReference>
<dbReference type="GO" id="GO:0006955">
    <property type="term" value="P:immune response"/>
    <property type="evidence" value="ECO:0000250"/>
    <property type="project" value="UniProtKB"/>
</dbReference>
<dbReference type="GO" id="GO:0035024">
    <property type="term" value="P:negative regulation of Rho protein signal transduction"/>
    <property type="evidence" value="ECO:0000250"/>
    <property type="project" value="UniProtKB"/>
</dbReference>
<dbReference type="GO" id="GO:0045740">
    <property type="term" value="P:positive regulation of DNA replication"/>
    <property type="evidence" value="ECO:0000314"/>
    <property type="project" value="RGD"/>
</dbReference>
<dbReference type="GO" id="GO:0043161">
    <property type="term" value="P:proteasome-mediated ubiquitin-dependent protein catabolic process"/>
    <property type="evidence" value="ECO:0000250"/>
    <property type="project" value="UniProtKB"/>
</dbReference>
<dbReference type="GO" id="GO:0051260">
    <property type="term" value="P:protein homooligomerization"/>
    <property type="evidence" value="ECO:0007669"/>
    <property type="project" value="InterPro"/>
</dbReference>
<dbReference type="GO" id="GO:0016567">
    <property type="term" value="P:protein ubiquitination"/>
    <property type="evidence" value="ECO:0000250"/>
    <property type="project" value="UniProtKB"/>
</dbReference>
<dbReference type="GO" id="GO:0043149">
    <property type="term" value="P:stress fiber assembly"/>
    <property type="evidence" value="ECO:0000250"/>
    <property type="project" value="UniProtKB"/>
</dbReference>
<dbReference type="CDD" id="cd18401">
    <property type="entry name" value="BTB_POZ_TNFAIP1_BACURD2"/>
    <property type="match status" value="1"/>
</dbReference>
<dbReference type="FunFam" id="3.30.710.10:FF:000013">
    <property type="entry name" value="BTB/POZ domain-containing adapter for CUL3-mediated RhoA degradation protein 3"/>
    <property type="match status" value="1"/>
</dbReference>
<dbReference type="Gene3D" id="3.30.710.10">
    <property type="entry name" value="Potassium Channel Kv1.1, Chain A"/>
    <property type="match status" value="1"/>
</dbReference>
<dbReference type="InterPro" id="IPR045068">
    <property type="entry name" value="BACURD1-3"/>
</dbReference>
<dbReference type="InterPro" id="IPR000210">
    <property type="entry name" value="BTB/POZ_dom"/>
</dbReference>
<dbReference type="InterPro" id="IPR011333">
    <property type="entry name" value="SKP1/BTB/POZ_sf"/>
</dbReference>
<dbReference type="InterPro" id="IPR003131">
    <property type="entry name" value="T1-type_BTB"/>
</dbReference>
<dbReference type="PANTHER" id="PTHR11145">
    <property type="entry name" value="BTB/POZ DOMAIN-CONTAINING ADAPTER FOR CUL3-MEDIATED RHOA DEGRADATION PROTEIN FAMILY MEMBER"/>
    <property type="match status" value="1"/>
</dbReference>
<dbReference type="PANTHER" id="PTHR11145:SF17">
    <property type="entry name" value="BTB_POZ DOMAIN-CONTAINING ADAPTER FOR CUL3-MEDIATED RHOA DEGRADATION PROTEIN 2"/>
    <property type="match status" value="1"/>
</dbReference>
<dbReference type="Pfam" id="PF02214">
    <property type="entry name" value="BTB_2"/>
    <property type="match status" value="1"/>
</dbReference>
<dbReference type="SMART" id="SM00225">
    <property type="entry name" value="BTB"/>
    <property type="match status" value="1"/>
</dbReference>
<dbReference type="SUPFAM" id="SSF54695">
    <property type="entry name" value="POZ domain"/>
    <property type="match status" value="1"/>
</dbReference>
<comment type="function">
    <text evidence="1 4">Substrate-specific adapter of a BCR (BTB-CUL3-RBX1) E3 ubiquitin-protein ligase complex involved in regulation of cytoskeleton structure. The BCR(TNFAIP1) E3 ubiquitin ligase complex mediates the ubiquitination of RHOA, leading to its degradation by the proteasome, thereby regulating the actin cytoskeleton and cell migration. Its interaction with RHOB may regulate apoptosis (By similarity). May enhance the PCNA-dependent DNA polymerase delta activity.</text>
</comment>
<comment type="pathway">
    <text>Protein modification; protein ubiquitination.</text>
</comment>
<comment type="subunit">
    <text evidence="1 4">Component of the BCR(TNFAIP1) E3 ubiquitin ligase complex, at least composed of CUL3, TNFAIP1/BACURD2 and RBX1. Interacts with RHOA; with a preference for RhoA-GDP. Interacts with RHOB. Interacts with CSNK2B (By similarity). Interacts with PCNA.</text>
</comment>
<comment type="subcellular location">
    <subcellularLocation>
        <location evidence="1">Cytoplasm</location>
    </subcellularLocation>
    <subcellularLocation>
        <location evidence="1">Nucleus</location>
    </subcellularLocation>
    <subcellularLocation>
        <location evidence="1">Endosome</location>
    </subcellularLocation>
    <text evidence="1">Colocalizes with RHOB in endosomes.</text>
</comment>
<comment type="PTM">
    <text evidence="1">Phosphorylation at Ser-280 by CK2 facilitates the nucleus localization and increases interaction with PCNA.</text>
</comment>
<comment type="similarity">
    <text evidence="5">Belongs to the BACURD family.</text>
</comment>
<sequence length="316" mass="36046">MSGDTCLCPASGAKPKISGFKGGGLGNKYVQLNVGGSLHYTTVRALTRHDTMLKAMFSGRMEVLTDKEGWILIDRCGKHFGTILNYLRDDTVTLPQSRQEIQELMAEAKYYLIQGLVSLCQAALQDKKDSYQPVCNIPIITSLREEDRLIESSTKPVVKLLYNRSNNKYSYTSNSDDHLLKNIELFDKLSLRFNGRVLFIKDVIGDEICCWSFYGQGRKLAEVCCTSIVYATEKKQTKVEFPEARIYEETLNVLLYETPRVPDNSLLEATSRSRSQASPSEDEDTFELRDRVRRIHVKRYSTYDDRQLGHQSAHRD</sequence>
<gene>
    <name type="primary">Tnfaip1</name>
</gene>
<feature type="chain" id="PRO_0000331249" description="BTB/POZ domain-containing adapter for CUL3-mediated RhoA degradation protein 2">
    <location>
        <begin position="1"/>
        <end position="316"/>
    </location>
</feature>
<feature type="domain" description="BTB">
    <location>
        <begin position="28"/>
        <end position="96"/>
    </location>
</feature>
<feature type="region of interest" description="Disordered" evidence="3">
    <location>
        <begin position="268"/>
        <end position="287"/>
    </location>
</feature>
<feature type="compositionally biased region" description="Polar residues" evidence="3">
    <location>
        <begin position="268"/>
        <end position="279"/>
    </location>
</feature>
<feature type="modified residue" description="Phosphoserine" evidence="2">
    <location>
        <position position="278"/>
    </location>
</feature>
<feature type="modified residue" description="Phosphoserine; by CK2" evidence="2">
    <location>
        <position position="280"/>
    </location>
</feature>
<organism>
    <name type="scientific">Rattus norvegicus</name>
    <name type="common">Rat</name>
    <dbReference type="NCBI Taxonomy" id="10116"/>
    <lineage>
        <taxon>Eukaryota</taxon>
        <taxon>Metazoa</taxon>
        <taxon>Chordata</taxon>
        <taxon>Craniata</taxon>
        <taxon>Vertebrata</taxon>
        <taxon>Euteleostomi</taxon>
        <taxon>Mammalia</taxon>
        <taxon>Eutheria</taxon>
        <taxon>Euarchontoglires</taxon>
        <taxon>Glires</taxon>
        <taxon>Rodentia</taxon>
        <taxon>Myomorpha</taxon>
        <taxon>Muroidea</taxon>
        <taxon>Muridae</taxon>
        <taxon>Murinae</taxon>
        <taxon>Rattus</taxon>
    </lineage>
</organism>
<accession>Q7TNY1</accession>
<reference key="1">
    <citation type="journal article" date="2005" name="J. Exp. Zool. A Comp. Exp. Biol.">
        <title>Cloning of two rat PDIP1 related genes and their interactions with proliferating cell nuclear antigen.</title>
        <authorList>
            <person name="Zhou J."/>
            <person name="Hu X."/>
            <person name="Xiong X."/>
            <person name="Liu X."/>
            <person name="Liu Y."/>
            <person name="Ren K."/>
            <person name="Jiang T."/>
            <person name="Hu X."/>
            <person name="Zhang J."/>
        </authorList>
    </citation>
    <scope>NUCLEOTIDE SEQUENCE [MRNA]</scope>
    <scope>FUNCTION</scope>
    <scope>INTERACTION WITH PCNA</scope>
    <source>
        <strain>Wistar</strain>
        <tissue>Liver</tissue>
    </source>
</reference>
<reference key="2">
    <citation type="journal article" date="2004" name="Genome Res.">
        <title>The status, quality, and expansion of the NIH full-length cDNA project: the Mammalian Gene Collection (MGC).</title>
        <authorList>
            <consortium name="The MGC Project Team"/>
        </authorList>
    </citation>
    <scope>NUCLEOTIDE SEQUENCE [LARGE SCALE MRNA]</scope>
    <source>
        <tissue>Placenta</tissue>
    </source>
</reference>
<evidence type="ECO:0000250" key="1"/>
<evidence type="ECO:0000250" key="2">
    <source>
        <dbReference type="UniProtKB" id="Q13829"/>
    </source>
</evidence>
<evidence type="ECO:0000256" key="3">
    <source>
        <dbReference type="SAM" id="MobiDB-lite"/>
    </source>
</evidence>
<evidence type="ECO:0000269" key="4">
    <source>
    </source>
</evidence>
<evidence type="ECO:0000305" key="5"/>
<proteinExistence type="evidence at protein level"/>